<protein>
    <recommendedName>
        <fullName evidence="1">Ribosomal RNA large subunit methyltransferase E</fullName>
        <ecNumber evidence="1">2.1.1.166</ecNumber>
    </recommendedName>
    <alternativeName>
        <fullName evidence="1">23S rRNA Um2552 methyltransferase</fullName>
    </alternativeName>
    <alternativeName>
        <fullName evidence="1">rRNA (uridine-2'-O-)-methyltransferase</fullName>
    </alternativeName>
</protein>
<proteinExistence type="inferred from homology"/>
<comment type="function">
    <text evidence="1">Specifically methylates the uridine in position 2552 of 23S rRNA at the 2'-O position of the ribose in the fully assembled 50S ribosomal subunit.</text>
</comment>
<comment type="catalytic activity">
    <reaction evidence="1">
        <text>uridine(2552) in 23S rRNA + S-adenosyl-L-methionine = 2'-O-methyluridine(2552) in 23S rRNA + S-adenosyl-L-homocysteine + H(+)</text>
        <dbReference type="Rhea" id="RHEA:42720"/>
        <dbReference type="Rhea" id="RHEA-COMP:10202"/>
        <dbReference type="Rhea" id="RHEA-COMP:10203"/>
        <dbReference type="ChEBI" id="CHEBI:15378"/>
        <dbReference type="ChEBI" id="CHEBI:57856"/>
        <dbReference type="ChEBI" id="CHEBI:59789"/>
        <dbReference type="ChEBI" id="CHEBI:65315"/>
        <dbReference type="ChEBI" id="CHEBI:74478"/>
        <dbReference type="EC" id="2.1.1.166"/>
    </reaction>
</comment>
<comment type="subcellular location">
    <subcellularLocation>
        <location evidence="1">Cytoplasm</location>
    </subcellularLocation>
</comment>
<comment type="similarity">
    <text evidence="1">Belongs to the class I-like SAM-binding methyltransferase superfamily. RNA methyltransferase RlmE family.</text>
</comment>
<accession>B6JHM9</accession>
<accession>F8BZ98</accession>
<sequence length="225" mass="24220">MAKDTTGRLHVTVKSGGKRKLSSKLWLERQLNDPYVAQAKRDGFRSRAAYKLREMDDKYHFLKQGQAVVDLGAAPGGWSQIAAKRVGAEAGRGKVIAIDLLEMGEIPGVTFAQLDFLSDDAPEKLRAMLGGGADIVMSDMAANTTGHRKTDQLRIVGLVESAAAFAAEVLNPGGTFLAKVFQSGADATLQAELKRNFATVRHVKPAASRQDSSERYVLAMGFRGG</sequence>
<dbReference type="EC" id="2.1.1.166" evidence="1"/>
<dbReference type="EMBL" id="CP001196">
    <property type="protein sequence ID" value="ACI93585.1"/>
    <property type="molecule type" value="Genomic_DNA"/>
</dbReference>
<dbReference type="EMBL" id="CP002826">
    <property type="protein sequence ID" value="AEI06294.1"/>
    <property type="molecule type" value="Genomic_DNA"/>
</dbReference>
<dbReference type="RefSeq" id="WP_012563611.1">
    <property type="nucleotide sequence ID" value="NC_015684.1"/>
</dbReference>
<dbReference type="SMR" id="B6JHM9"/>
<dbReference type="STRING" id="504832.OCA5_c15800"/>
<dbReference type="KEGG" id="oca:OCAR_6472"/>
<dbReference type="KEGG" id="ocg:OCA5_c15800"/>
<dbReference type="PATRIC" id="fig|504832.7.peg.1683"/>
<dbReference type="eggNOG" id="COG0293">
    <property type="taxonomic scope" value="Bacteria"/>
</dbReference>
<dbReference type="HOGENOM" id="CLU_009422_4_0_5"/>
<dbReference type="OrthoDB" id="9790080at2"/>
<dbReference type="Proteomes" id="UP000007730">
    <property type="component" value="Chromosome"/>
</dbReference>
<dbReference type="GO" id="GO:0005737">
    <property type="term" value="C:cytoplasm"/>
    <property type="evidence" value="ECO:0007669"/>
    <property type="project" value="UniProtKB-SubCell"/>
</dbReference>
<dbReference type="GO" id="GO:0008650">
    <property type="term" value="F:rRNA (uridine-2'-O-)-methyltransferase activity"/>
    <property type="evidence" value="ECO:0007669"/>
    <property type="project" value="UniProtKB-UniRule"/>
</dbReference>
<dbReference type="Gene3D" id="3.40.50.150">
    <property type="entry name" value="Vaccinia Virus protein VP39"/>
    <property type="match status" value="1"/>
</dbReference>
<dbReference type="HAMAP" id="MF_01547">
    <property type="entry name" value="RNA_methyltr_E"/>
    <property type="match status" value="1"/>
</dbReference>
<dbReference type="InterPro" id="IPR050082">
    <property type="entry name" value="RNA_methyltr_RlmE"/>
</dbReference>
<dbReference type="InterPro" id="IPR002877">
    <property type="entry name" value="RNA_MeTrfase_FtsJ_dom"/>
</dbReference>
<dbReference type="InterPro" id="IPR015507">
    <property type="entry name" value="rRNA-MeTfrase_E"/>
</dbReference>
<dbReference type="InterPro" id="IPR029063">
    <property type="entry name" value="SAM-dependent_MTases_sf"/>
</dbReference>
<dbReference type="PANTHER" id="PTHR10920">
    <property type="entry name" value="RIBOSOMAL RNA METHYLTRANSFERASE"/>
    <property type="match status" value="1"/>
</dbReference>
<dbReference type="PANTHER" id="PTHR10920:SF18">
    <property type="entry name" value="RRNA METHYLTRANSFERASE 2, MITOCHONDRIAL"/>
    <property type="match status" value="1"/>
</dbReference>
<dbReference type="Pfam" id="PF01728">
    <property type="entry name" value="FtsJ"/>
    <property type="match status" value="1"/>
</dbReference>
<dbReference type="PIRSF" id="PIRSF005461">
    <property type="entry name" value="23S_rRNA_mtase"/>
    <property type="match status" value="1"/>
</dbReference>
<dbReference type="SUPFAM" id="SSF53335">
    <property type="entry name" value="S-adenosyl-L-methionine-dependent methyltransferases"/>
    <property type="match status" value="1"/>
</dbReference>
<name>RLME_AFIC5</name>
<evidence type="ECO:0000255" key="1">
    <source>
        <dbReference type="HAMAP-Rule" id="MF_01547"/>
    </source>
</evidence>
<feature type="chain" id="PRO_1000195004" description="Ribosomal RNA large subunit methyltransferase E">
    <location>
        <begin position="1"/>
        <end position="225"/>
    </location>
</feature>
<feature type="active site" description="Proton acceptor" evidence="1">
    <location>
        <position position="179"/>
    </location>
</feature>
<feature type="binding site" evidence="1">
    <location>
        <position position="76"/>
    </location>
    <ligand>
        <name>S-adenosyl-L-methionine</name>
        <dbReference type="ChEBI" id="CHEBI:59789"/>
    </ligand>
</feature>
<feature type="binding site" evidence="1">
    <location>
        <position position="78"/>
    </location>
    <ligand>
        <name>S-adenosyl-L-methionine</name>
        <dbReference type="ChEBI" id="CHEBI:59789"/>
    </ligand>
</feature>
<feature type="binding site" evidence="1">
    <location>
        <position position="99"/>
    </location>
    <ligand>
        <name>S-adenosyl-L-methionine</name>
        <dbReference type="ChEBI" id="CHEBI:59789"/>
    </ligand>
</feature>
<feature type="binding site" evidence="1">
    <location>
        <position position="115"/>
    </location>
    <ligand>
        <name>S-adenosyl-L-methionine</name>
        <dbReference type="ChEBI" id="CHEBI:59789"/>
    </ligand>
</feature>
<feature type="binding site" evidence="1">
    <location>
        <position position="139"/>
    </location>
    <ligand>
        <name>S-adenosyl-L-methionine</name>
        <dbReference type="ChEBI" id="CHEBI:59789"/>
    </ligand>
</feature>
<reference key="1">
    <citation type="journal article" date="2008" name="J. Bacteriol.">
        <title>Genome sequence of the chemolithoautotrophic bacterium Oligotropha carboxidovorans OM5T.</title>
        <authorList>
            <person name="Paul D."/>
            <person name="Bridges S."/>
            <person name="Burgess S.C."/>
            <person name="Dandass Y."/>
            <person name="Lawrence M.L."/>
        </authorList>
    </citation>
    <scope>NUCLEOTIDE SEQUENCE [LARGE SCALE GENOMIC DNA]</scope>
    <source>
        <strain>ATCC 49405 / DSM 1227 / KCTC 32145 / OM5</strain>
    </source>
</reference>
<reference key="2">
    <citation type="journal article" date="2011" name="J. Bacteriol.">
        <title>Complete genome sequences of the chemolithoautotrophic Oligotropha carboxidovorans strains OM4 and OM5.</title>
        <authorList>
            <person name="Volland S."/>
            <person name="Rachinger M."/>
            <person name="Strittmatter A."/>
            <person name="Daniel R."/>
            <person name="Gottschalk G."/>
            <person name="Meyer O."/>
        </authorList>
    </citation>
    <scope>NUCLEOTIDE SEQUENCE [LARGE SCALE GENOMIC DNA]</scope>
    <source>
        <strain>ATCC 49405 / DSM 1227 / KCTC 32145 / OM5</strain>
    </source>
</reference>
<gene>
    <name evidence="1" type="primary">rlmE</name>
    <name evidence="1" type="synonym">ftsJ</name>
    <name evidence="1" type="synonym">rrmJ</name>
    <name type="ordered locus">OCAR_6472</name>
    <name type="ordered locus">OCA5_c15800</name>
</gene>
<organism>
    <name type="scientific">Afipia carboxidovorans (strain ATCC 49405 / DSM 1227 / KCTC 32145 / OM5)</name>
    <name type="common">Oligotropha carboxidovorans</name>
    <dbReference type="NCBI Taxonomy" id="504832"/>
    <lineage>
        <taxon>Bacteria</taxon>
        <taxon>Pseudomonadati</taxon>
        <taxon>Pseudomonadota</taxon>
        <taxon>Alphaproteobacteria</taxon>
        <taxon>Hyphomicrobiales</taxon>
        <taxon>Nitrobacteraceae</taxon>
        <taxon>Afipia</taxon>
    </lineage>
</organism>
<keyword id="KW-0963">Cytoplasm</keyword>
<keyword id="KW-0489">Methyltransferase</keyword>
<keyword id="KW-1185">Reference proteome</keyword>
<keyword id="KW-0698">rRNA processing</keyword>
<keyword id="KW-0949">S-adenosyl-L-methionine</keyword>
<keyword id="KW-0808">Transferase</keyword>